<gene>
    <name evidence="1" type="primary">rsmG</name>
    <name type="ordered locus">PG_1307</name>
</gene>
<protein>
    <recommendedName>
        <fullName evidence="1">Ribosomal RNA small subunit methyltransferase G</fullName>
        <ecNumber evidence="1">2.1.1.-</ecNumber>
    </recommendedName>
    <alternativeName>
        <fullName evidence="1">16S rRNA 7-methylguanosine methyltransferase</fullName>
        <shortName evidence="1">16S rRNA m7G methyltransferase</shortName>
    </alternativeName>
</protein>
<reference key="1">
    <citation type="journal article" date="2003" name="J. Bacteriol.">
        <title>Complete genome sequence of the oral pathogenic bacterium Porphyromonas gingivalis strain W83.</title>
        <authorList>
            <person name="Nelson K.E."/>
            <person name="Fleischmann R.D."/>
            <person name="DeBoy R.T."/>
            <person name="Paulsen I.T."/>
            <person name="Fouts D.E."/>
            <person name="Eisen J.A."/>
            <person name="Daugherty S.C."/>
            <person name="Dodson R.J."/>
            <person name="Durkin A.S."/>
            <person name="Gwinn M.L."/>
            <person name="Haft D.H."/>
            <person name="Kolonay J.F."/>
            <person name="Nelson W.C."/>
            <person name="Mason T.M."/>
            <person name="Tallon L."/>
            <person name="Gray J."/>
            <person name="Granger D."/>
            <person name="Tettelin H."/>
            <person name="Dong H."/>
            <person name="Galvin J.L."/>
            <person name="Duncan M.J."/>
            <person name="Dewhirst F.E."/>
            <person name="Fraser C.M."/>
        </authorList>
    </citation>
    <scope>NUCLEOTIDE SEQUENCE [LARGE SCALE GENOMIC DNA]</scope>
    <source>
        <strain>ATCC BAA-308 / W83</strain>
    </source>
</reference>
<evidence type="ECO:0000255" key="1">
    <source>
        <dbReference type="HAMAP-Rule" id="MF_00074"/>
    </source>
</evidence>
<sequence>MQEIPEKPLSQPAGTEIIEKYFPHLSERQREQFEQMGGLYTHWNALINVISRKDIDNLYLHHVLHSLGIARMLNFKPGTSVLDLGTGGGFPGIPLAILFPQVSFLLVDSIGKKVKVASAVAEALGLDNVRTMHCRAESIGEKFDFIVSRAVMKLSELAKICRKLIRREDQQNALPNGLICLKGGELQHEILPFRNKAMTEELWPTFEEEYFKTKKVVYLPL</sequence>
<accession>Q7MV10</accession>
<comment type="function">
    <text evidence="1">Specifically methylates the N7 position of a guanine in 16S rRNA.</text>
</comment>
<comment type="subcellular location">
    <subcellularLocation>
        <location evidence="1">Cytoplasm</location>
    </subcellularLocation>
</comment>
<comment type="similarity">
    <text evidence="1">Belongs to the methyltransferase superfamily. RNA methyltransferase RsmG family.</text>
</comment>
<organism>
    <name type="scientific">Porphyromonas gingivalis (strain ATCC BAA-308 / W83)</name>
    <dbReference type="NCBI Taxonomy" id="242619"/>
    <lineage>
        <taxon>Bacteria</taxon>
        <taxon>Pseudomonadati</taxon>
        <taxon>Bacteroidota</taxon>
        <taxon>Bacteroidia</taxon>
        <taxon>Bacteroidales</taxon>
        <taxon>Porphyromonadaceae</taxon>
        <taxon>Porphyromonas</taxon>
    </lineage>
</organism>
<keyword id="KW-0963">Cytoplasm</keyword>
<keyword id="KW-0489">Methyltransferase</keyword>
<keyword id="KW-1185">Reference proteome</keyword>
<keyword id="KW-0698">rRNA processing</keyword>
<keyword id="KW-0949">S-adenosyl-L-methionine</keyword>
<keyword id="KW-0808">Transferase</keyword>
<feature type="chain" id="PRO_0000184301" description="Ribosomal RNA small subunit methyltransferase G">
    <location>
        <begin position="1"/>
        <end position="221"/>
    </location>
</feature>
<feature type="binding site" evidence="1">
    <location>
        <position position="85"/>
    </location>
    <ligand>
        <name>S-adenosyl-L-methionine</name>
        <dbReference type="ChEBI" id="CHEBI:59789"/>
    </ligand>
</feature>
<feature type="binding site" evidence="1">
    <location>
        <position position="90"/>
    </location>
    <ligand>
        <name>S-adenosyl-L-methionine</name>
        <dbReference type="ChEBI" id="CHEBI:59789"/>
    </ligand>
</feature>
<feature type="binding site" evidence="1">
    <location>
        <begin position="136"/>
        <end position="137"/>
    </location>
    <ligand>
        <name>S-adenosyl-L-methionine</name>
        <dbReference type="ChEBI" id="CHEBI:59789"/>
    </ligand>
</feature>
<feature type="binding site" evidence="1">
    <location>
        <position position="149"/>
    </location>
    <ligand>
        <name>S-adenosyl-L-methionine</name>
        <dbReference type="ChEBI" id="CHEBI:59789"/>
    </ligand>
</feature>
<name>RSMG_PORGI</name>
<dbReference type="EC" id="2.1.1.-" evidence="1"/>
<dbReference type="EMBL" id="AE015924">
    <property type="protein sequence ID" value="AAQ66380.1"/>
    <property type="molecule type" value="Genomic_DNA"/>
</dbReference>
<dbReference type="RefSeq" id="WP_010956275.1">
    <property type="nucleotide sequence ID" value="NC_002950.2"/>
</dbReference>
<dbReference type="SMR" id="Q7MV10"/>
<dbReference type="STRING" id="242619.PG_1307"/>
<dbReference type="EnsemblBacteria" id="AAQ66380">
    <property type="protein sequence ID" value="AAQ66380"/>
    <property type="gene ID" value="PG_1307"/>
</dbReference>
<dbReference type="KEGG" id="pgi:PG_1307"/>
<dbReference type="eggNOG" id="COG0357">
    <property type="taxonomic scope" value="Bacteria"/>
</dbReference>
<dbReference type="HOGENOM" id="CLU_065341_2_2_10"/>
<dbReference type="Proteomes" id="UP000000588">
    <property type="component" value="Chromosome"/>
</dbReference>
<dbReference type="GO" id="GO:0005829">
    <property type="term" value="C:cytosol"/>
    <property type="evidence" value="ECO:0007669"/>
    <property type="project" value="TreeGrafter"/>
</dbReference>
<dbReference type="GO" id="GO:0070043">
    <property type="term" value="F:rRNA (guanine-N7-)-methyltransferase activity"/>
    <property type="evidence" value="ECO:0007669"/>
    <property type="project" value="UniProtKB-UniRule"/>
</dbReference>
<dbReference type="CDD" id="cd02440">
    <property type="entry name" value="AdoMet_MTases"/>
    <property type="match status" value="1"/>
</dbReference>
<dbReference type="Gene3D" id="3.40.50.150">
    <property type="entry name" value="Vaccinia Virus protein VP39"/>
    <property type="match status" value="1"/>
</dbReference>
<dbReference type="HAMAP" id="MF_00074">
    <property type="entry name" value="16SrRNA_methyltr_G"/>
    <property type="match status" value="1"/>
</dbReference>
<dbReference type="InterPro" id="IPR003682">
    <property type="entry name" value="rRNA_ssu_MeTfrase_G"/>
</dbReference>
<dbReference type="InterPro" id="IPR029063">
    <property type="entry name" value="SAM-dependent_MTases_sf"/>
</dbReference>
<dbReference type="NCBIfam" id="TIGR00138">
    <property type="entry name" value="rsmG_gidB"/>
    <property type="match status" value="1"/>
</dbReference>
<dbReference type="PANTHER" id="PTHR31760">
    <property type="entry name" value="S-ADENOSYL-L-METHIONINE-DEPENDENT METHYLTRANSFERASES SUPERFAMILY PROTEIN"/>
    <property type="match status" value="1"/>
</dbReference>
<dbReference type="PANTHER" id="PTHR31760:SF0">
    <property type="entry name" value="S-ADENOSYL-L-METHIONINE-DEPENDENT METHYLTRANSFERASES SUPERFAMILY PROTEIN"/>
    <property type="match status" value="1"/>
</dbReference>
<dbReference type="Pfam" id="PF02527">
    <property type="entry name" value="GidB"/>
    <property type="match status" value="1"/>
</dbReference>
<dbReference type="PIRSF" id="PIRSF003078">
    <property type="entry name" value="GidB"/>
    <property type="match status" value="1"/>
</dbReference>
<dbReference type="SUPFAM" id="SSF53335">
    <property type="entry name" value="S-adenosyl-L-methionine-dependent methyltransferases"/>
    <property type="match status" value="1"/>
</dbReference>
<proteinExistence type="inferred from homology"/>